<dbReference type="EMBL" id="AP006859">
    <property type="protein sequence ID" value="BAD46701.1"/>
    <property type="status" value="ALT_SEQ"/>
    <property type="molecule type" value="Genomic_DNA"/>
</dbReference>
<dbReference type="EMBL" id="AP008215">
    <property type="status" value="NOT_ANNOTATED_CDS"/>
    <property type="molecule type" value="Genomic_DNA"/>
</dbReference>
<dbReference type="EMBL" id="AP014965">
    <property type="status" value="NOT_ANNOTATED_CDS"/>
    <property type="molecule type" value="Genomic_DNA"/>
</dbReference>
<dbReference type="EMBL" id="CM000142">
    <property type="protein sequence ID" value="EEE62624.1"/>
    <property type="status" value="ALT_SEQ"/>
    <property type="molecule type" value="Genomic_DNA"/>
</dbReference>
<dbReference type="EMBL" id="CM000142">
    <property type="protein sequence ID" value="EEE62626.1"/>
    <property type="status" value="ALT_SEQ"/>
    <property type="molecule type" value="Genomic_DNA"/>
</dbReference>
<dbReference type="STRING" id="39947.B9FMX4"/>
<dbReference type="PaxDb" id="39947-B9FMX4"/>
<dbReference type="eggNOG" id="KOG1161">
    <property type="taxonomic scope" value="Eukaryota"/>
</dbReference>
<dbReference type="eggNOG" id="KOG2325">
    <property type="taxonomic scope" value="Eukaryota"/>
</dbReference>
<dbReference type="HOGENOM" id="CLU_025236_1_0_1"/>
<dbReference type="InParanoid" id="B9FMX4"/>
<dbReference type="Proteomes" id="UP000000763">
    <property type="component" value="Chromosome 9"/>
</dbReference>
<dbReference type="Proteomes" id="UP000007752">
    <property type="component" value="Chromosome 5"/>
</dbReference>
<dbReference type="Proteomes" id="UP000059680">
    <property type="component" value="Chromosome 9"/>
</dbReference>
<dbReference type="GO" id="GO:0016020">
    <property type="term" value="C:membrane"/>
    <property type="evidence" value="ECO:0000318"/>
    <property type="project" value="GO_Central"/>
</dbReference>
<dbReference type="GO" id="GO:0022857">
    <property type="term" value="F:transmembrane transporter activity"/>
    <property type="evidence" value="ECO:0000318"/>
    <property type="project" value="GO_Central"/>
</dbReference>
<dbReference type="CDD" id="cd14479">
    <property type="entry name" value="SPX-MFS_plant"/>
    <property type="match status" value="1"/>
</dbReference>
<dbReference type="Gene3D" id="1.20.1250.20">
    <property type="entry name" value="MFS general substrate transporter like domains"/>
    <property type="match status" value="1"/>
</dbReference>
<dbReference type="InterPro" id="IPR011701">
    <property type="entry name" value="MFS"/>
</dbReference>
<dbReference type="InterPro" id="IPR020846">
    <property type="entry name" value="MFS_dom"/>
</dbReference>
<dbReference type="InterPro" id="IPR051068">
    <property type="entry name" value="MFS_Domain-Containing_Protein"/>
</dbReference>
<dbReference type="InterPro" id="IPR036259">
    <property type="entry name" value="MFS_trans_sf"/>
</dbReference>
<dbReference type="InterPro" id="IPR004331">
    <property type="entry name" value="SPX_dom"/>
</dbReference>
<dbReference type="InterPro" id="IPR045264">
    <property type="entry name" value="SPXM_SPX_plant"/>
</dbReference>
<dbReference type="PANTHER" id="PTHR23510">
    <property type="entry name" value="INNER MEMBRANE TRANSPORT PROTEIN YAJR"/>
    <property type="match status" value="1"/>
</dbReference>
<dbReference type="PANTHER" id="PTHR23510:SF65">
    <property type="entry name" value="SPX DOMAIN-CONTAINING MEMBRANE PROTEIN OS09G0521800"/>
    <property type="match status" value="1"/>
</dbReference>
<dbReference type="Pfam" id="PF07690">
    <property type="entry name" value="MFS_1"/>
    <property type="match status" value="1"/>
</dbReference>
<dbReference type="SUPFAM" id="SSF103473">
    <property type="entry name" value="MFS general substrate transporter"/>
    <property type="match status" value="1"/>
</dbReference>
<dbReference type="PROSITE" id="PS50850">
    <property type="entry name" value="MFS"/>
    <property type="match status" value="1"/>
</dbReference>
<dbReference type="PROSITE" id="PS51382">
    <property type="entry name" value="SPX"/>
    <property type="match status" value="1"/>
</dbReference>
<feature type="chain" id="PRO_0000398577" description="SPX domain-containing membrane protein Os09g0521800">
    <location>
        <begin position="1"/>
        <end position="706"/>
    </location>
</feature>
<feature type="transmembrane region" description="Helical" evidence="1">
    <location>
        <begin position="251"/>
        <end position="271"/>
    </location>
</feature>
<feature type="transmembrane region" description="Helical" evidence="1">
    <location>
        <begin position="281"/>
        <end position="301"/>
    </location>
</feature>
<feature type="transmembrane region" description="Helical" evidence="1">
    <location>
        <begin position="318"/>
        <end position="338"/>
    </location>
</feature>
<feature type="transmembrane region" description="Helical" evidence="1">
    <location>
        <begin position="340"/>
        <end position="359"/>
    </location>
</feature>
<feature type="transmembrane region" description="Helical" evidence="1">
    <location>
        <begin position="378"/>
        <end position="398"/>
    </location>
</feature>
<feature type="transmembrane region" description="Helical" evidence="1">
    <location>
        <begin position="414"/>
        <end position="434"/>
    </location>
</feature>
<feature type="transmembrane region" description="Helical" evidence="1">
    <location>
        <begin position="520"/>
        <end position="540"/>
    </location>
</feature>
<feature type="transmembrane region" description="Helical" evidence="1">
    <location>
        <begin position="554"/>
        <end position="574"/>
    </location>
</feature>
<feature type="transmembrane region" description="Helical" evidence="1">
    <location>
        <begin position="583"/>
        <end position="603"/>
    </location>
</feature>
<feature type="transmembrane region" description="Helical" evidence="1">
    <location>
        <begin position="611"/>
        <end position="631"/>
    </location>
</feature>
<feature type="transmembrane region" description="Helical" evidence="1">
    <location>
        <begin position="678"/>
        <end position="698"/>
    </location>
</feature>
<feature type="domain" description="SPX" evidence="2">
    <location>
        <begin position="2"/>
        <end position="145"/>
    </location>
</feature>
<feature type="region of interest" description="Disordered" evidence="3">
    <location>
        <begin position="475"/>
        <end position="498"/>
    </location>
</feature>
<feature type="compositionally biased region" description="Acidic residues" evidence="3">
    <location>
        <begin position="476"/>
        <end position="488"/>
    </location>
</feature>
<sequence length="706" mass="78011">MVNFSNKLTKDQIPGWEEYYFNYKMLKGRVNEYTEQTKEGTQYRRRVLKDFSKLLDDEIEKIVLFMIEQQGLIAARLEDLGKRRARLQDIPLLQEITELREDYRSVGLDLVTLLKFVELNANAVRKILKKFDERLGYKFTDYYVRSRSNHPYSQLQQVFRHVGIGAVVGALSRNLSDLEERQGSYLNIYDQHPLAIPKDPIIDLITATADKLTNSTNFLRFLGQHALIAQADSTAGTEDEQHVGEDEYHLMSLVLNLANTFLYMVNTYIVVPTADGYATSLGAAATACGAVIGSMAVAQVFSSVYFSAWSNRSYFRPLLFSSVVLLLGNVMYAMAFDLGSLTILLLGRVLCGMGSARAVNRRYISDCVPPRIRMQASAAFVSASALGMACGPALAGLLQTNFSLYGLTINQITLPGWIMAFGWLVYLIWLWILFQEPDLGPDVKDFYEGSSSSTSTRYMEQEKMEQGFTEHLLPSEQDEEDDNGDEEHNETLSSSTTTLRPASSVASAYTLLTPSVKVQLLIYFMLKYAMEILLAESSVVTGYYFGWDIGTVSVFLAVLGLSVLPVNAIVGTYISNMFEDRQILVASEMALLAGVMLSFKLTVEYTAAQYVCSAVLTFVSAEVVEGVNLSLLSRVMSARLSRGTYNGGLLSTEAGTVARVVADGTITAAGLLAGEGRLLNATLLPALLVCVASIAATLSTYNSLFY</sequence>
<evidence type="ECO:0000255" key="1"/>
<evidence type="ECO:0000255" key="2">
    <source>
        <dbReference type="PROSITE-ProRule" id="PRU00714"/>
    </source>
</evidence>
<evidence type="ECO:0000256" key="3">
    <source>
        <dbReference type="SAM" id="MobiDB-lite"/>
    </source>
</evidence>
<evidence type="ECO:0000305" key="4"/>
<organism>
    <name type="scientific">Oryza sativa subsp. japonica</name>
    <name type="common">Rice</name>
    <dbReference type="NCBI Taxonomy" id="39947"/>
    <lineage>
        <taxon>Eukaryota</taxon>
        <taxon>Viridiplantae</taxon>
        <taxon>Streptophyta</taxon>
        <taxon>Embryophyta</taxon>
        <taxon>Tracheophyta</taxon>
        <taxon>Spermatophyta</taxon>
        <taxon>Magnoliopsida</taxon>
        <taxon>Liliopsida</taxon>
        <taxon>Poales</taxon>
        <taxon>Poaceae</taxon>
        <taxon>BOP clade</taxon>
        <taxon>Oryzoideae</taxon>
        <taxon>Oryzeae</taxon>
        <taxon>Oryzinae</taxon>
        <taxon>Oryza</taxon>
        <taxon>Oryza sativa</taxon>
    </lineage>
</organism>
<name>SPXM4_ORYSJ</name>
<protein>
    <recommendedName>
        <fullName>SPX domain-containing membrane protein Os09g0521800</fullName>
    </recommendedName>
</protein>
<accession>B9FMX4</accession>
<accession>B9FMX2</accession>
<accession>Q64MA4</accession>
<proteinExistence type="inferred from homology"/>
<comment type="subcellular location">
    <subcellularLocation>
        <location evidence="4">Membrane</location>
        <topology evidence="4">Multi-pass membrane protein</topology>
    </subcellularLocation>
</comment>
<comment type="similarity">
    <text evidence="4">Belongs to the major facilitator superfamily.</text>
</comment>
<comment type="sequence caution" evidence="4">
    <conflict type="erroneous gene model prediction">
        <sequence resource="EMBL-CDS" id="BAD46701"/>
    </conflict>
</comment>
<comment type="sequence caution" evidence="4">
    <conflict type="erroneous gene model prediction">
        <sequence resource="EMBL-CDS" id="EEE62624"/>
    </conflict>
    <text>Was originally thought to correspond to two different genes.</text>
</comment>
<comment type="sequence caution" evidence="4">
    <conflict type="erroneous gene model prediction">
        <sequence resource="EMBL-CDS" id="EEE62626"/>
    </conflict>
    <text>Was originally thought to correspond to two different genes.</text>
</comment>
<reference key="1">
    <citation type="journal article" date="2005" name="Nature">
        <title>The map-based sequence of the rice genome.</title>
        <authorList>
            <consortium name="International rice genome sequencing project (IRGSP)"/>
        </authorList>
    </citation>
    <scope>NUCLEOTIDE SEQUENCE [LARGE SCALE GENOMIC DNA]</scope>
    <source>
        <strain>cv. Nipponbare</strain>
    </source>
</reference>
<reference key="2">
    <citation type="journal article" date="2008" name="Nucleic Acids Res.">
        <title>The rice annotation project database (RAP-DB): 2008 update.</title>
        <authorList>
            <consortium name="The rice annotation project (RAP)"/>
        </authorList>
    </citation>
    <scope>GENOME REANNOTATION</scope>
    <source>
        <strain>cv. Nipponbare</strain>
    </source>
</reference>
<reference key="3">
    <citation type="journal article" date="2013" name="Rice">
        <title>Improvement of the Oryza sativa Nipponbare reference genome using next generation sequence and optical map data.</title>
        <authorList>
            <person name="Kawahara Y."/>
            <person name="de la Bastide M."/>
            <person name="Hamilton J.P."/>
            <person name="Kanamori H."/>
            <person name="McCombie W.R."/>
            <person name="Ouyang S."/>
            <person name="Schwartz D.C."/>
            <person name="Tanaka T."/>
            <person name="Wu J."/>
            <person name="Zhou S."/>
            <person name="Childs K.L."/>
            <person name="Davidson R.M."/>
            <person name="Lin H."/>
            <person name="Quesada-Ocampo L."/>
            <person name="Vaillancourt B."/>
            <person name="Sakai H."/>
            <person name="Lee S.S."/>
            <person name="Kim J."/>
            <person name="Numa H."/>
            <person name="Itoh T."/>
            <person name="Buell C.R."/>
            <person name="Matsumoto T."/>
        </authorList>
    </citation>
    <scope>GENOME REANNOTATION</scope>
    <source>
        <strain>cv. Nipponbare</strain>
    </source>
</reference>
<reference key="4">
    <citation type="journal article" date="2005" name="PLoS Biol.">
        <title>The genomes of Oryza sativa: a history of duplications.</title>
        <authorList>
            <person name="Yu J."/>
            <person name="Wang J."/>
            <person name="Lin W."/>
            <person name="Li S."/>
            <person name="Li H."/>
            <person name="Zhou J."/>
            <person name="Ni P."/>
            <person name="Dong W."/>
            <person name="Hu S."/>
            <person name="Zeng C."/>
            <person name="Zhang J."/>
            <person name="Zhang Y."/>
            <person name="Li R."/>
            <person name="Xu Z."/>
            <person name="Li S."/>
            <person name="Li X."/>
            <person name="Zheng H."/>
            <person name="Cong L."/>
            <person name="Lin L."/>
            <person name="Yin J."/>
            <person name="Geng J."/>
            <person name="Li G."/>
            <person name="Shi J."/>
            <person name="Liu J."/>
            <person name="Lv H."/>
            <person name="Li J."/>
            <person name="Wang J."/>
            <person name="Deng Y."/>
            <person name="Ran L."/>
            <person name="Shi X."/>
            <person name="Wang X."/>
            <person name="Wu Q."/>
            <person name="Li C."/>
            <person name="Ren X."/>
            <person name="Wang J."/>
            <person name="Wang X."/>
            <person name="Li D."/>
            <person name="Liu D."/>
            <person name="Zhang X."/>
            <person name="Ji Z."/>
            <person name="Zhao W."/>
            <person name="Sun Y."/>
            <person name="Zhang Z."/>
            <person name="Bao J."/>
            <person name="Han Y."/>
            <person name="Dong L."/>
            <person name="Ji J."/>
            <person name="Chen P."/>
            <person name="Wu S."/>
            <person name="Liu J."/>
            <person name="Xiao Y."/>
            <person name="Bu D."/>
            <person name="Tan J."/>
            <person name="Yang L."/>
            <person name="Ye C."/>
            <person name="Zhang J."/>
            <person name="Xu J."/>
            <person name="Zhou Y."/>
            <person name="Yu Y."/>
            <person name="Zhang B."/>
            <person name="Zhuang S."/>
            <person name="Wei H."/>
            <person name="Liu B."/>
            <person name="Lei M."/>
            <person name="Yu H."/>
            <person name="Li Y."/>
            <person name="Xu H."/>
            <person name="Wei S."/>
            <person name="He X."/>
            <person name="Fang L."/>
            <person name="Zhang Z."/>
            <person name="Zhang Y."/>
            <person name="Huang X."/>
            <person name="Su Z."/>
            <person name="Tong W."/>
            <person name="Li J."/>
            <person name="Tong Z."/>
            <person name="Li S."/>
            <person name="Ye J."/>
            <person name="Wang L."/>
            <person name="Fang L."/>
            <person name="Lei T."/>
            <person name="Chen C.-S."/>
            <person name="Chen H.-C."/>
            <person name="Xu Z."/>
            <person name="Li H."/>
            <person name="Huang H."/>
            <person name="Zhang F."/>
            <person name="Xu H."/>
            <person name="Li N."/>
            <person name="Zhao C."/>
            <person name="Li S."/>
            <person name="Dong L."/>
            <person name="Huang Y."/>
            <person name="Li L."/>
            <person name="Xi Y."/>
            <person name="Qi Q."/>
            <person name="Li W."/>
            <person name="Zhang B."/>
            <person name="Hu W."/>
            <person name="Zhang Y."/>
            <person name="Tian X."/>
            <person name="Jiao Y."/>
            <person name="Liang X."/>
            <person name="Jin J."/>
            <person name="Gao L."/>
            <person name="Zheng W."/>
            <person name="Hao B."/>
            <person name="Liu S.-M."/>
            <person name="Wang W."/>
            <person name="Yuan L."/>
            <person name="Cao M."/>
            <person name="McDermott J."/>
            <person name="Samudrala R."/>
            <person name="Wang J."/>
            <person name="Wong G.K.-S."/>
            <person name="Yang H."/>
        </authorList>
    </citation>
    <scope>NUCLEOTIDE SEQUENCE [LARGE SCALE GENOMIC DNA]</scope>
    <source>
        <strain>cv. Nipponbare</strain>
    </source>
</reference>
<keyword id="KW-0472">Membrane</keyword>
<keyword id="KW-1185">Reference proteome</keyword>
<keyword id="KW-0812">Transmembrane</keyword>
<keyword id="KW-1133">Transmembrane helix</keyword>
<gene>
    <name type="ordered locus">Os09g0521800</name>
    <name type="ordered locus">LOC_Os09g34990</name>
    <name type="ORF">OsJ_17427/OsJ_17429</name>
    <name type="ORF">OSJNOa273B05.6</name>
</gene>